<dbReference type="EC" id="4.2.3.5" evidence="1"/>
<dbReference type="EMBL" id="AP008937">
    <property type="protein sequence ID" value="BAG27444.1"/>
    <property type="molecule type" value="Genomic_DNA"/>
</dbReference>
<dbReference type="RefSeq" id="WP_012391353.1">
    <property type="nucleotide sequence ID" value="NC_010610.1"/>
</dbReference>
<dbReference type="SMR" id="B2GCR2"/>
<dbReference type="KEGG" id="lfe:LAF_1108"/>
<dbReference type="PATRIC" id="fig|334390.5.peg.1225"/>
<dbReference type="eggNOG" id="COG0082">
    <property type="taxonomic scope" value="Bacteria"/>
</dbReference>
<dbReference type="HOGENOM" id="CLU_034547_2_0_9"/>
<dbReference type="UniPathway" id="UPA00053">
    <property type="reaction ID" value="UER00090"/>
</dbReference>
<dbReference type="Proteomes" id="UP000001697">
    <property type="component" value="Chromosome"/>
</dbReference>
<dbReference type="GO" id="GO:0005829">
    <property type="term" value="C:cytosol"/>
    <property type="evidence" value="ECO:0007669"/>
    <property type="project" value="TreeGrafter"/>
</dbReference>
<dbReference type="GO" id="GO:0004107">
    <property type="term" value="F:chorismate synthase activity"/>
    <property type="evidence" value="ECO:0007669"/>
    <property type="project" value="UniProtKB-UniRule"/>
</dbReference>
<dbReference type="GO" id="GO:0010181">
    <property type="term" value="F:FMN binding"/>
    <property type="evidence" value="ECO:0007669"/>
    <property type="project" value="TreeGrafter"/>
</dbReference>
<dbReference type="GO" id="GO:0008652">
    <property type="term" value="P:amino acid biosynthetic process"/>
    <property type="evidence" value="ECO:0007669"/>
    <property type="project" value="UniProtKB-KW"/>
</dbReference>
<dbReference type="GO" id="GO:0009073">
    <property type="term" value="P:aromatic amino acid family biosynthetic process"/>
    <property type="evidence" value="ECO:0007669"/>
    <property type="project" value="UniProtKB-KW"/>
</dbReference>
<dbReference type="GO" id="GO:0009423">
    <property type="term" value="P:chorismate biosynthetic process"/>
    <property type="evidence" value="ECO:0007669"/>
    <property type="project" value="UniProtKB-UniRule"/>
</dbReference>
<dbReference type="CDD" id="cd07304">
    <property type="entry name" value="Chorismate_synthase"/>
    <property type="match status" value="1"/>
</dbReference>
<dbReference type="FunFam" id="3.60.150.10:FF:000002">
    <property type="entry name" value="Chorismate synthase"/>
    <property type="match status" value="1"/>
</dbReference>
<dbReference type="Gene3D" id="3.60.150.10">
    <property type="entry name" value="Chorismate synthase AroC"/>
    <property type="match status" value="1"/>
</dbReference>
<dbReference type="HAMAP" id="MF_00300">
    <property type="entry name" value="Chorismate_synth"/>
    <property type="match status" value="1"/>
</dbReference>
<dbReference type="InterPro" id="IPR000453">
    <property type="entry name" value="Chorismate_synth"/>
</dbReference>
<dbReference type="InterPro" id="IPR035904">
    <property type="entry name" value="Chorismate_synth_AroC_sf"/>
</dbReference>
<dbReference type="NCBIfam" id="TIGR00033">
    <property type="entry name" value="aroC"/>
    <property type="match status" value="1"/>
</dbReference>
<dbReference type="NCBIfam" id="NF003793">
    <property type="entry name" value="PRK05382.1"/>
    <property type="match status" value="1"/>
</dbReference>
<dbReference type="PANTHER" id="PTHR21085">
    <property type="entry name" value="CHORISMATE SYNTHASE"/>
    <property type="match status" value="1"/>
</dbReference>
<dbReference type="PANTHER" id="PTHR21085:SF0">
    <property type="entry name" value="CHORISMATE SYNTHASE"/>
    <property type="match status" value="1"/>
</dbReference>
<dbReference type="Pfam" id="PF01264">
    <property type="entry name" value="Chorismate_synt"/>
    <property type="match status" value="1"/>
</dbReference>
<dbReference type="PIRSF" id="PIRSF001456">
    <property type="entry name" value="Chorismate_synth"/>
    <property type="match status" value="1"/>
</dbReference>
<dbReference type="SUPFAM" id="SSF103263">
    <property type="entry name" value="Chorismate synthase, AroC"/>
    <property type="match status" value="1"/>
</dbReference>
<comment type="function">
    <text evidence="1">Catalyzes the anti-1,4-elimination of the C-3 phosphate and the C-6 proR hydrogen from 5-enolpyruvylshikimate-3-phosphate (EPSP) to yield chorismate, which is the branch point compound that serves as the starting substrate for the three terminal pathways of aromatic amino acid biosynthesis. This reaction introduces a second double bond into the aromatic ring system.</text>
</comment>
<comment type="catalytic activity">
    <reaction evidence="1">
        <text>5-O-(1-carboxyvinyl)-3-phosphoshikimate = chorismate + phosphate</text>
        <dbReference type="Rhea" id="RHEA:21020"/>
        <dbReference type="ChEBI" id="CHEBI:29748"/>
        <dbReference type="ChEBI" id="CHEBI:43474"/>
        <dbReference type="ChEBI" id="CHEBI:57701"/>
        <dbReference type="EC" id="4.2.3.5"/>
    </reaction>
</comment>
<comment type="cofactor">
    <cofactor evidence="1">
        <name>FMNH2</name>
        <dbReference type="ChEBI" id="CHEBI:57618"/>
    </cofactor>
    <text evidence="1">Reduced FMN (FMNH(2)).</text>
</comment>
<comment type="pathway">
    <text evidence="1">Metabolic intermediate biosynthesis; chorismate biosynthesis; chorismate from D-erythrose 4-phosphate and phosphoenolpyruvate: step 7/7.</text>
</comment>
<comment type="subunit">
    <text evidence="1">Homotetramer.</text>
</comment>
<comment type="similarity">
    <text evidence="1">Belongs to the chorismate synthase family.</text>
</comment>
<organism>
    <name type="scientific">Limosilactobacillus fermentum (strain NBRC 3956 / LMG 18251)</name>
    <name type="common">Lactobacillus fermentum</name>
    <dbReference type="NCBI Taxonomy" id="334390"/>
    <lineage>
        <taxon>Bacteria</taxon>
        <taxon>Bacillati</taxon>
        <taxon>Bacillota</taxon>
        <taxon>Bacilli</taxon>
        <taxon>Lactobacillales</taxon>
        <taxon>Lactobacillaceae</taxon>
        <taxon>Limosilactobacillus</taxon>
    </lineage>
</organism>
<keyword id="KW-0028">Amino-acid biosynthesis</keyword>
<keyword id="KW-0057">Aromatic amino acid biosynthesis</keyword>
<keyword id="KW-0274">FAD</keyword>
<keyword id="KW-0285">Flavoprotein</keyword>
<keyword id="KW-0288">FMN</keyword>
<keyword id="KW-0456">Lyase</keyword>
<keyword id="KW-0521">NADP</keyword>
<keyword id="KW-1185">Reference proteome</keyword>
<feature type="chain" id="PRO_1000115362" description="Chorismate synthase">
    <location>
        <begin position="1"/>
        <end position="388"/>
    </location>
</feature>
<feature type="binding site" evidence="1">
    <location>
        <position position="40"/>
    </location>
    <ligand>
        <name>NADP(+)</name>
        <dbReference type="ChEBI" id="CHEBI:58349"/>
    </ligand>
</feature>
<feature type="binding site" evidence="1">
    <location>
        <position position="46"/>
    </location>
    <ligand>
        <name>NADP(+)</name>
        <dbReference type="ChEBI" id="CHEBI:58349"/>
    </ligand>
</feature>
<feature type="binding site" evidence="1">
    <location>
        <begin position="131"/>
        <end position="133"/>
    </location>
    <ligand>
        <name>FMN</name>
        <dbReference type="ChEBI" id="CHEBI:58210"/>
    </ligand>
</feature>
<feature type="binding site" evidence="1">
    <location>
        <begin position="252"/>
        <end position="253"/>
    </location>
    <ligand>
        <name>FMN</name>
        <dbReference type="ChEBI" id="CHEBI:58210"/>
    </ligand>
</feature>
<feature type="binding site" evidence="1">
    <location>
        <position position="296"/>
    </location>
    <ligand>
        <name>FMN</name>
        <dbReference type="ChEBI" id="CHEBI:58210"/>
    </ligand>
</feature>
<feature type="binding site" evidence="1">
    <location>
        <begin position="311"/>
        <end position="315"/>
    </location>
    <ligand>
        <name>FMN</name>
        <dbReference type="ChEBI" id="CHEBI:58210"/>
    </ligand>
</feature>
<feature type="binding site" evidence="1">
    <location>
        <position position="337"/>
    </location>
    <ligand>
        <name>FMN</name>
        <dbReference type="ChEBI" id="CHEBI:58210"/>
    </ligand>
</feature>
<evidence type="ECO:0000255" key="1">
    <source>
        <dbReference type="HAMAP-Rule" id="MF_00300"/>
    </source>
</evidence>
<protein>
    <recommendedName>
        <fullName evidence="1">Chorismate synthase</fullName>
        <shortName evidence="1">CS</shortName>
        <ecNumber evidence="1">4.2.3.5</ecNumber>
    </recommendedName>
    <alternativeName>
        <fullName evidence="1">5-enolpyruvylshikimate-3-phosphate phospholyase</fullName>
    </alternativeName>
</protein>
<sequence length="388" mass="41636">MLTYLTAGESHGPQGTAIIEGIPAGLAIDVDQINADLASRQGGYGRGSRQQIEHDQVEILGGVRHGLTLGSPITLVVKNRDHAHWSSIMHPTSPATAENTLRKVERPRPGHADLVGGMKYRHRDLRNVLERSSARETAIRVAVGNVCKQLLAALGVTLVGYVQAIGPVDTDLTKPQTVSEIKDAITQNNLRILAQDRVAELHDLIDQTRRAGDTLGGWIRVVVNGMPAGIGSYVSWDTKLDGQLAAAVMGVNAMKGVSIGDGFEISRHPGSQGMDEISHDADGYHRLSNHLGGLEGGMTNGMPLIINAAMKPIPTLYKALKTVNVVTKEVEKASVERSDTTAIVPASIVIENVVAIELAKALTNSFNADNLARLQEQLAAYREELRGY</sequence>
<gene>
    <name evidence="1" type="primary">aroC</name>
    <name type="ordered locus">LAF_1108</name>
</gene>
<proteinExistence type="inferred from homology"/>
<name>AROC_LIMF3</name>
<reference key="1">
    <citation type="journal article" date="2008" name="DNA Res.">
        <title>Comparative genome analysis of Lactobacillus reuteri and Lactobacillus fermentum reveal a genomic island for reuterin and cobalamin production.</title>
        <authorList>
            <person name="Morita H."/>
            <person name="Toh H."/>
            <person name="Fukuda S."/>
            <person name="Horikawa H."/>
            <person name="Oshima K."/>
            <person name="Suzuki T."/>
            <person name="Murakami M."/>
            <person name="Hisamatsu S."/>
            <person name="Kato Y."/>
            <person name="Takizawa T."/>
            <person name="Fukuoka H."/>
            <person name="Yoshimura T."/>
            <person name="Itoh K."/>
            <person name="O'Sullivan D.J."/>
            <person name="McKay L.L."/>
            <person name="Ohno H."/>
            <person name="Kikuchi J."/>
            <person name="Masaoka T."/>
            <person name="Hattori M."/>
        </authorList>
    </citation>
    <scope>NUCLEOTIDE SEQUENCE [LARGE SCALE GENOMIC DNA]</scope>
    <source>
        <strain>NBRC 3956 / LMG 18251</strain>
    </source>
</reference>
<accession>B2GCR2</accession>